<evidence type="ECO:0000255" key="1">
    <source>
        <dbReference type="HAMAP-Rule" id="MF_00123"/>
    </source>
</evidence>
<reference key="1">
    <citation type="submission" date="2006-03" db="EMBL/GenBank/DDBJ databases">
        <title>Complete genome sequence of Francisella tularensis LVS (Live Vaccine Strain).</title>
        <authorList>
            <person name="Chain P."/>
            <person name="Larimer F."/>
            <person name="Land M."/>
            <person name="Stilwagen S."/>
            <person name="Larsson P."/>
            <person name="Bearden S."/>
            <person name="Chu M."/>
            <person name="Oyston P."/>
            <person name="Forsman M."/>
            <person name="Andersson S."/>
            <person name="Lindler L."/>
            <person name="Titball R."/>
            <person name="Garcia E."/>
        </authorList>
    </citation>
    <scope>NUCLEOTIDE SEQUENCE [LARGE SCALE GENOMIC DNA]</scope>
    <source>
        <strain>LVS</strain>
    </source>
</reference>
<feature type="chain" id="PRO_0000242022" description="Arginine--tRNA ligase">
    <location>
        <begin position="1"/>
        <end position="581"/>
    </location>
</feature>
<feature type="short sequence motif" description="'HIGH' region">
    <location>
        <begin position="122"/>
        <end position="132"/>
    </location>
</feature>
<gene>
    <name evidence="1" type="primary">argS</name>
    <name type="ordered locus">FTL_1598</name>
</gene>
<accession>Q2A215</accession>
<name>SYR_FRATH</name>
<dbReference type="EC" id="6.1.1.19" evidence="1"/>
<dbReference type="EMBL" id="AM233362">
    <property type="protein sequence ID" value="CAJ80037.1"/>
    <property type="molecule type" value="Genomic_DNA"/>
</dbReference>
<dbReference type="RefSeq" id="WP_010031328.1">
    <property type="nucleotide sequence ID" value="NZ_CP009694.1"/>
</dbReference>
<dbReference type="SMR" id="Q2A215"/>
<dbReference type="KEGG" id="ftl:FTL_1598"/>
<dbReference type="Proteomes" id="UP000001944">
    <property type="component" value="Chromosome"/>
</dbReference>
<dbReference type="GO" id="GO:0005737">
    <property type="term" value="C:cytoplasm"/>
    <property type="evidence" value="ECO:0007669"/>
    <property type="project" value="UniProtKB-SubCell"/>
</dbReference>
<dbReference type="GO" id="GO:0004814">
    <property type="term" value="F:arginine-tRNA ligase activity"/>
    <property type="evidence" value="ECO:0007669"/>
    <property type="project" value="UniProtKB-UniRule"/>
</dbReference>
<dbReference type="GO" id="GO:0005524">
    <property type="term" value="F:ATP binding"/>
    <property type="evidence" value="ECO:0007669"/>
    <property type="project" value="UniProtKB-UniRule"/>
</dbReference>
<dbReference type="GO" id="GO:0006420">
    <property type="term" value="P:arginyl-tRNA aminoacylation"/>
    <property type="evidence" value="ECO:0007669"/>
    <property type="project" value="UniProtKB-UniRule"/>
</dbReference>
<dbReference type="CDD" id="cd00671">
    <property type="entry name" value="ArgRS_core"/>
    <property type="match status" value="1"/>
</dbReference>
<dbReference type="Gene3D" id="3.30.1360.70">
    <property type="entry name" value="Arginyl tRNA synthetase N-terminal domain"/>
    <property type="match status" value="1"/>
</dbReference>
<dbReference type="Gene3D" id="3.40.50.620">
    <property type="entry name" value="HUPs"/>
    <property type="match status" value="1"/>
</dbReference>
<dbReference type="Gene3D" id="1.10.730.10">
    <property type="entry name" value="Isoleucyl-tRNA Synthetase, Domain 1"/>
    <property type="match status" value="1"/>
</dbReference>
<dbReference type="HAMAP" id="MF_00123">
    <property type="entry name" value="Arg_tRNA_synth"/>
    <property type="match status" value="1"/>
</dbReference>
<dbReference type="InterPro" id="IPR001412">
    <property type="entry name" value="aa-tRNA-synth_I_CS"/>
</dbReference>
<dbReference type="InterPro" id="IPR001278">
    <property type="entry name" value="Arg-tRNA-ligase"/>
</dbReference>
<dbReference type="InterPro" id="IPR005148">
    <property type="entry name" value="Arg-tRNA-synth_N"/>
</dbReference>
<dbReference type="InterPro" id="IPR036695">
    <property type="entry name" value="Arg-tRNA-synth_N_sf"/>
</dbReference>
<dbReference type="InterPro" id="IPR035684">
    <property type="entry name" value="ArgRS_core"/>
</dbReference>
<dbReference type="InterPro" id="IPR008909">
    <property type="entry name" value="DALR_anticod-bd"/>
</dbReference>
<dbReference type="InterPro" id="IPR014729">
    <property type="entry name" value="Rossmann-like_a/b/a_fold"/>
</dbReference>
<dbReference type="InterPro" id="IPR009080">
    <property type="entry name" value="tRNAsynth_Ia_anticodon-bd"/>
</dbReference>
<dbReference type="NCBIfam" id="TIGR00456">
    <property type="entry name" value="argS"/>
    <property type="match status" value="1"/>
</dbReference>
<dbReference type="PANTHER" id="PTHR11956:SF5">
    <property type="entry name" value="ARGININE--TRNA LIGASE, CYTOPLASMIC"/>
    <property type="match status" value="1"/>
</dbReference>
<dbReference type="PANTHER" id="PTHR11956">
    <property type="entry name" value="ARGINYL-TRNA SYNTHETASE"/>
    <property type="match status" value="1"/>
</dbReference>
<dbReference type="Pfam" id="PF03485">
    <property type="entry name" value="Arg_tRNA_synt_N"/>
    <property type="match status" value="1"/>
</dbReference>
<dbReference type="Pfam" id="PF05746">
    <property type="entry name" value="DALR_1"/>
    <property type="match status" value="1"/>
</dbReference>
<dbReference type="Pfam" id="PF00750">
    <property type="entry name" value="tRNA-synt_1d"/>
    <property type="match status" value="1"/>
</dbReference>
<dbReference type="PRINTS" id="PR01038">
    <property type="entry name" value="TRNASYNTHARG"/>
</dbReference>
<dbReference type="SMART" id="SM01016">
    <property type="entry name" value="Arg_tRNA_synt_N"/>
    <property type="match status" value="1"/>
</dbReference>
<dbReference type="SMART" id="SM00836">
    <property type="entry name" value="DALR_1"/>
    <property type="match status" value="1"/>
</dbReference>
<dbReference type="SUPFAM" id="SSF47323">
    <property type="entry name" value="Anticodon-binding domain of a subclass of class I aminoacyl-tRNA synthetases"/>
    <property type="match status" value="1"/>
</dbReference>
<dbReference type="SUPFAM" id="SSF55190">
    <property type="entry name" value="Arginyl-tRNA synthetase (ArgRS), N-terminal 'additional' domain"/>
    <property type="match status" value="1"/>
</dbReference>
<dbReference type="SUPFAM" id="SSF52374">
    <property type="entry name" value="Nucleotidylyl transferase"/>
    <property type="match status" value="1"/>
</dbReference>
<dbReference type="PROSITE" id="PS00178">
    <property type="entry name" value="AA_TRNA_LIGASE_I"/>
    <property type="match status" value="1"/>
</dbReference>
<proteinExistence type="inferred from homology"/>
<keyword id="KW-0030">Aminoacyl-tRNA synthetase</keyword>
<keyword id="KW-0067">ATP-binding</keyword>
<keyword id="KW-0963">Cytoplasm</keyword>
<keyword id="KW-0436">Ligase</keyword>
<keyword id="KW-0547">Nucleotide-binding</keyword>
<keyword id="KW-0648">Protein biosynthesis</keyword>
<keyword id="KW-1185">Reference proteome</keyword>
<comment type="catalytic activity">
    <reaction evidence="1">
        <text>tRNA(Arg) + L-arginine + ATP = L-arginyl-tRNA(Arg) + AMP + diphosphate</text>
        <dbReference type="Rhea" id="RHEA:20301"/>
        <dbReference type="Rhea" id="RHEA-COMP:9658"/>
        <dbReference type="Rhea" id="RHEA-COMP:9673"/>
        <dbReference type="ChEBI" id="CHEBI:30616"/>
        <dbReference type="ChEBI" id="CHEBI:32682"/>
        <dbReference type="ChEBI" id="CHEBI:33019"/>
        <dbReference type="ChEBI" id="CHEBI:78442"/>
        <dbReference type="ChEBI" id="CHEBI:78513"/>
        <dbReference type="ChEBI" id="CHEBI:456215"/>
        <dbReference type="EC" id="6.1.1.19"/>
    </reaction>
</comment>
<comment type="subunit">
    <text evidence="1">Monomer.</text>
</comment>
<comment type="subcellular location">
    <subcellularLocation>
        <location evidence="1">Cytoplasm</location>
    </subcellularLocation>
</comment>
<comment type="similarity">
    <text evidence="1">Belongs to the class-I aminoacyl-tRNA synthetase family.</text>
</comment>
<protein>
    <recommendedName>
        <fullName evidence="1">Arginine--tRNA ligase</fullName>
        <ecNumber evidence="1">6.1.1.19</ecNumber>
    </recommendedName>
    <alternativeName>
        <fullName evidence="1">Arginyl-tRNA synthetase</fullName>
        <shortName evidence="1">ArgRS</shortName>
    </alternativeName>
</protein>
<organism>
    <name type="scientific">Francisella tularensis subsp. holarctica (strain LVS)</name>
    <dbReference type="NCBI Taxonomy" id="376619"/>
    <lineage>
        <taxon>Bacteria</taxon>
        <taxon>Pseudomonadati</taxon>
        <taxon>Pseudomonadota</taxon>
        <taxon>Gammaproteobacteria</taxon>
        <taxon>Thiotrichales</taxon>
        <taxon>Francisellaceae</taxon>
        <taxon>Francisella</taxon>
    </lineage>
</organism>
<sequence>MNIENYLSETLAKVFQKLGYAESFAKVVTSTREDVGHFQCNGAMPLAKFAKKPPLAIAEEIVEHIDAEDIFAKLEVAKPGFINITLAPKFLADTTNRFLNSNKFGVQNNLPNRKVVLDFGGPNVAKPMHVGHIRSALLGDALQRIHRFCGDTVISDVHLGDWGTQMGMLIEEIKLQSPQLVYFDENYTGEYPTESPITVQELAEIYPRASKRCKSDINEMEKARLATFELQQGRRGYVALWQHFVRISIDAVKKDFDSLDVHFDLWLGESDANKFIDEMISYFQANNFIYEDEGAWVIDTNKDGVPPLIVIKKDGGVMYGTTDLATLWQRSKDLDPDEIIYVVDKRQSLHFKQVFSVAERTKVVSEKCKLKHVAFGTVNGKDGRPFKTREGGVMHLADLISQAKEYAKNRMPDENDDSIIDQIAMATIKFGDLINNYANDYFFDLEKFAQHEGKTGPYLLYTVVRAKSILRKIFGDNYDIKSLAKDYKVVNAHNEYEEKLQLQLIQFPIAVQRAYENSQPHHICEYAYSLANSFNKFYVNCPINNLDDESLKKARIALCMATVKAMTIASDLIGISIPERM</sequence>